<gene>
    <name evidence="1" type="primary">rsmJ</name>
    <name type="ordered locus">Shewmr7_3921</name>
</gene>
<sequence>MAAISTCQTVIPLPIPVFFNQQFPTLVDICARWQLVFDADAPFELRFESDTLTLHKRDEPKLDGIIVDFVTGAVAHRRKFGGGRGQSIAKAVGLKQGVTPKVVDGTAGLGRDAFVLASLGCTVTMVERHPVVAALLEDGLRRAYQDAEIGDWMRERMQLFHGSSLEALAKLEQEVDVVYLDPMYPHRDKSALVKKEMRVFQTLVGADLDADGLLAPAMALASKRVVVKRPDYAEDLAGVKPSMVIETKKNRFDVYVKSAMK</sequence>
<evidence type="ECO:0000255" key="1">
    <source>
        <dbReference type="HAMAP-Rule" id="MF_01523"/>
    </source>
</evidence>
<organism>
    <name type="scientific">Shewanella sp. (strain MR-7)</name>
    <dbReference type="NCBI Taxonomy" id="60481"/>
    <lineage>
        <taxon>Bacteria</taxon>
        <taxon>Pseudomonadati</taxon>
        <taxon>Pseudomonadota</taxon>
        <taxon>Gammaproteobacteria</taxon>
        <taxon>Alteromonadales</taxon>
        <taxon>Shewanellaceae</taxon>
        <taxon>Shewanella</taxon>
    </lineage>
</organism>
<accession>Q0HPQ7</accession>
<dbReference type="EC" id="2.1.1.242" evidence="1"/>
<dbReference type="EMBL" id="CP000444">
    <property type="protein sequence ID" value="ABI44898.1"/>
    <property type="molecule type" value="Genomic_DNA"/>
</dbReference>
<dbReference type="SMR" id="Q0HPQ7"/>
<dbReference type="KEGG" id="shm:Shewmr7_3921"/>
<dbReference type="HOGENOM" id="CLU_076324_0_1_6"/>
<dbReference type="GO" id="GO:0005737">
    <property type="term" value="C:cytoplasm"/>
    <property type="evidence" value="ECO:0007669"/>
    <property type="project" value="UniProtKB-SubCell"/>
</dbReference>
<dbReference type="GO" id="GO:0008990">
    <property type="term" value="F:rRNA (guanine-N2-)-methyltransferase activity"/>
    <property type="evidence" value="ECO:0007669"/>
    <property type="project" value="UniProtKB-UniRule"/>
</dbReference>
<dbReference type="CDD" id="cd02440">
    <property type="entry name" value="AdoMet_MTases"/>
    <property type="match status" value="1"/>
</dbReference>
<dbReference type="Gene3D" id="3.40.50.150">
    <property type="entry name" value="Vaccinia Virus protein VP39"/>
    <property type="match status" value="1"/>
</dbReference>
<dbReference type="Gene3D" id="3.40.1630.10">
    <property type="entry name" value="YhiQ-like domain"/>
    <property type="match status" value="1"/>
</dbReference>
<dbReference type="HAMAP" id="MF_01523">
    <property type="entry name" value="16SrRNA_methyltr_J"/>
    <property type="match status" value="1"/>
</dbReference>
<dbReference type="InterPro" id="IPR007536">
    <property type="entry name" value="16SrRNA_methylTrfase_J"/>
</dbReference>
<dbReference type="InterPro" id="IPR029063">
    <property type="entry name" value="SAM-dependent_MTases_sf"/>
</dbReference>
<dbReference type="PANTHER" id="PTHR36112">
    <property type="entry name" value="RIBOSOMAL RNA SMALL SUBUNIT METHYLTRANSFERASE J"/>
    <property type="match status" value="1"/>
</dbReference>
<dbReference type="PANTHER" id="PTHR36112:SF1">
    <property type="entry name" value="RIBOSOMAL RNA SMALL SUBUNIT METHYLTRANSFERASE J"/>
    <property type="match status" value="1"/>
</dbReference>
<dbReference type="Pfam" id="PF04445">
    <property type="entry name" value="SAM_MT"/>
    <property type="match status" value="1"/>
</dbReference>
<dbReference type="SUPFAM" id="SSF53335">
    <property type="entry name" value="S-adenosyl-L-methionine-dependent methyltransferases"/>
    <property type="match status" value="1"/>
</dbReference>
<comment type="function">
    <text evidence="1">Specifically methylates the guanosine in position 1516 of 16S rRNA.</text>
</comment>
<comment type="catalytic activity">
    <reaction evidence="1">
        <text>guanosine(1516) in 16S rRNA + S-adenosyl-L-methionine = N(2)-methylguanosine(1516) in 16S rRNA + S-adenosyl-L-homocysteine + H(+)</text>
        <dbReference type="Rhea" id="RHEA:43220"/>
        <dbReference type="Rhea" id="RHEA-COMP:10412"/>
        <dbReference type="Rhea" id="RHEA-COMP:10413"/>
        <dbReference type="ChEBI" id="CHEBI:15378"/>
        <dbReference type="ChEBI" id="CHEBI:57856"/>
        <dbReference type="ChEBI" id="CHEBI:59789"/>
        <dbReference type="ChEBI" id="CHEBI:74269"/>
        <dbReference type="ChEBI" id="CHEBI:74481"/>
        <dbReference type="EC" id="2.1.1.242"/>
    </reaction>
</comment>
<comment type="subcellular location">
    <subcellularLocation>
        <location evidence="1">Cytoplasm</location>
    </subcellularLocation>
</comment>
<comment type="similarity">
    <text evidence="1">Belongs to the methyltransferase superfamily. RsmJ family.</text>
</comment>
<keyword id="KW-0963">Cytoplasm</keyword>
<keyword id="KW-0489">Methyltransferase</keyword>
<keyword id="KW-0698">rRNA processing</keyword>
<keyword id="KW-0949">S-adenosyl-L-methionine</keyword>
<keyword id="KW-0808">Transferase</keyword>
<name>RSMJ_SHESR</name>
<proteinExistence type="inferred from homology"/>
<feature type="chain" id="PRO_0000292649" description="Ribosomal RNA small subunit methyltransferase J">
    <location>
        <begin position="1"/>
        <end position="261"/>
    </location>
</feature>
<feature type="binding site" evidence="1">
    <location>
        <begin position="111"/>
        <end position="112"/>
    </location>
    <ligand>
        <name>S-adenosyl-L-methionine</name>
        <dbReference type="ChEBI" id="CHEBI:59789"/>
    </ligand>
</feature>
<feature type="binding site" evidence="1">
    <location>
        <begin position="127"/>
        <end position="128"/>
    </location>
    <ligand>
        <name>S-adenosyl-L-methionine</name>
        <dbReference type="ChEBI" id="CHEBI:59789"/>
    </ligand>
</feature>
<feature type="binding site" evidence="1">
    <location>
        <begin position="163"/>
        <end position="164"/>
    </location>
    <ligand>
        <name>S-adenosyl-L-methionine</name>
        <dbReference type="ChEBI" id="CHEBI:59789"/>
    </ligand>
</feature>
<feature type="binding site" evidence="1">
    <location>
        <position position="181"/>
    </location>
    <ligand>
        <name>S-adenosyl-L-methionine</name>
        <dbReference type="ChEBI" id="CHEBI:59789"/>
    </ligand>
</feature>
<protein>
    <recommendedName>
        <fullName evidence="1">Ribosomal RNA small subunit methyltransferase J</fullName>
        <ecNumber evidence="1">2.1.1.242</ecNumber>
    </recommendedName>
    <alternativeName>
        <fullName evidence="1">16S rRNA m2G1516 methyltransferase</fullName>
    </alternativeName>
    <alternativeName>
        <fullName evidence="1">rRNA (guanine-N(2)-)-methyltransferase</fullName>
    </alternativeName>
</protein>
<reference key="1">
    <citation type="submission" date="2006-08" db="EMBL/GenBank/DDBJ databases">
        <title>Complete sequence of chromosome 1 of Shewanella sp. MR-7.</title>
        <authorList>
            <person name="Copeland A."/>
            <person name="Lucas S."/>
            <person name="Lapidus A."/>
            <person name="Barry K."/>
            <person name="Detter J.C."/>
            <person name="Glavina del Rio T."/>
            <person name="Hammon N."/>
            <person name="Israni S."/>
            <person name="Dalin E."/>
            <person name="Tice H."/>
            <person name="Pitluck S."/>
            <person name="Kiss H."/>
            <person name="Brettin T."/>
            <person name="Bruce D."/>
            <person name="Han C."/>
            <person name="Tapia R."/>
            <person name="Gilna P."/>
            <person name="Schmutz J."/>
            <person name="Larimer F."/>
            <person name="Land M."/>
            <person name="Hauser L."/>
            <person name="Kyrpides N."/>
            <person name="Mikhailova N."/>
            <person name="Nealson K."/>
            <person name="Konstantinidis K."/>
            <person name="Klappenbach J."/>
            <person name="Tiedje J."/>
            <person name="Richardson P."/>
        </authorList>
    </citation>
    <scope>NUCLEOTIDE SEQUENCE [LARGE SCALE GENOMIC DNA]</scope>
    <source>
        <strain>MR-7</strain>
    </source>
</reference>